<comment type="function">
    <text evidence="1">Catalyzes the formation of N(7)-methylguanine at position 46 (m7G46) in tRNA.</text>
</comment>
<comment type="catalytic activity">
    <reaction evidence="1">
        <text>guanosine(46) in tRNA + S-adenosyl-L-methionine = N(7)-methylguanosine(46) in tRNA + S-adenosyl-L-homocysteine</text>
        <dbReference type="Rhea" id="RHEA:42708"/>
        <dbReference type="Rhea" id="RHEA-COMP:10188"/>
        <dbReference type="Rhea" id="RHEA-COMP:10189"/>
        <dbReference type="ChEBI" id="CHEBI:57856"/>
        <dbReference type="ChEBI" id="CHEBI:59789"/>
        <dbReference type="ChEBI" id="CHEBI:74269"/>
        <dbReference type="ChEBI" id="CHEBI:74480"/>
        <dbReference type="EC" id="2.1.1.33"/>
    </reaction>
</comment>
<comment type="pathway">
    <text evidence="1">tRNA modification; N(7)-methylguanine-tRNA biosynthesis.</text>
</comment>
<comment type="subcellular location">
    <subcellularLocation>
        <location evidence="1">Nucleus</location>
    </subcellularLocation>
</comment>
<comment type="similarity">
    <text evidence="1">Belongs to the class I-like SAM-binding methyltransferase superfamily. TrmB family.</text>
</comment>
<accession>B6SHG7</accession>
<sequence>MTRTNDASGGGKLPRKRFYRARAHSNPLSDSHFPVPISPEEVDLSQHYPRYFPADKGSDGEEAAAPQQIRFADVGCGFGGLLVGLSPLFPDTLMIGMELRDKVTEYVKERILALRGANPGQYDNISVVRTNSMKYIPNYFRKAQLTKMFFLFPDPHFKEKNHRRRVISMQLLDEYAYVMEVGGIIYTITDVEELGEWMRSCLEKHPLFETVPEEEIKADPVFKLLSTATEESQKVARNGGQTFYAIFRRISLQEE</sequence>
<feature type="chain" id="PRO_0000370580" description="tRNA (guanine-N(7)-)-methyltransferase">
    <location>
        <begin position="1"/>
        <end position="255"/>
    </location>
</feature>
<feature type="region of interest" description="Disordered" evidence="2">
    <location>
        <begin position="1"/>
        <end position="35"/>
    </location>
</feature>
<feature type="compositionally biased region" description="Basic residues" evidence="2">
    <location>
        <begin position="13"/>
        <end position="23"/>
    </location>
</feature>
<feature type="active site" evidence="1">
    <location>
        <position position="154"/>
    </location>
</feature>
<feature type="binding site" evidence="1">
    <location>
        <position position="75"/>
    </location>
    <ligand>
        <name>S-adenosyl-L-methionine</name>
        <dbReference type="ChEBI" id="CHEBI:59789"/>
    </ligand>
</feature>
<feature type="binding site" evidence="1">
    <location>
        <begin position="98"/>
        <end position="99"/>
    </location>
    <ligand>
        <name>S-adenosyl-L-methionine</name>
        <dbReference type="ChEBI" id="CHEBI:59789"/>
    </ligand>
</feature>
<feature type="binding site" evidence="1">
    <location>
        <begin position="131"/>
        <end position="132"/>
    </location>
    <ligand>
        <name>S-adenosyl-L-methionine</name>
        <dbReference type="ChEBI" id="CHEBI:59789"/>
    </ligand>
</feature>
<feature type="binding site" evidence="1">
    <location>
        <position position="151"/>
    </location>
    <ligand>
        <name>S-adenosyl-L-methionine</name>
        <dbReference type="ChEBI" id="CHEBI:59789"/>
    </ligand>
</feature>
<feature type="binding site" evidence="1">
    <location>
        <begin position="229"/>
        <end position="231"/>
    </location>
    <ligand>
        <name>S-adenosyl-L-methionine</name>
        <dbReference type="ChEBI" id="CHEBI:59789"/>
    </ligand>
</feature>
<evidence type="ECO:0000255" key="1">
    <source>
        <dbReference type="HAMAP-Rule" id="MF_03055"/>
    </source>
</evidence>
<evidence type="ECO:0000256" key="2">
    <source>
        <dbReference type="SAM" id="MobiDB-lite"/>
    </source>
</evidence>
<reference key="1">
    <citation type="journal article" date="2009" name="Plant Mol. Biol.">
        <title>Insights into corn genes derived from large-scale cDNA sequencing.</title>
        <authorList>
            <person name="Alexandrov N.N."/>
            <person name="Brover V.V."/>
            <person name="Freidin S."/>
            <person name="Troukhan M.E."/>
            <person name="Tatarinova T.V."/>
            <person name="Zhang H."/>
            <person name="Swaller T.J."/>
            <person name="Lu Y.-P."/>
            <person name="Bouck J."/>
            <person name="Flavell R.B."/>
            <person name="Feldmann K.A."/>
        </authorList>
    </citation>
    <scope>NUCLEOTIDE SEQUENCE [LARGE SCALE MRNA]</scope>
</reference>
<reference key="2">
    <citation type="submission" date="2009-01" db="EMBL/GenBank/DDBJ databases">
        <title>Maize full-length cDNA project.</title>
        <authorList>
            <person name="Yu Y."/>
            <person name="Currie J."/>
            <person name="Lomeli R."/>
            <person name="Angelova A."/>
            <person name="Collura K."/>
            <person name="Wissotski M."/>
            <person name="Campos D."/>
            <person name="Kudrna D."/>
            <person name="Golser W."/>
            <person name="Ashely E."/>
            <person name="Haller K."/>
            <person name="Descour A."/>
            <person name="Fernandes J."/>
            <person name="Zuccolo A."/>
            <person name="Soderlund C."/>
            <person name="Walbot V."/>
        </authorList>
    </citation>
    <scope>NUCLEOTIDE SEQUENCE [LARGE SCALE MRNA]</scope>
    <source>
        <strain>cv. B73</strain>
    </source>
</reference>
<protein>
    <recommendedName>
        <fullName evidence="1">tRNA (guanine-N(7)-)-methyltransferase</fullName>
        <ecNumber evidence="1">2.1.1.33</ecNumber>
    </recommendedName>
    <alternativeName>
        <fullName evidence="1">tRNA (guanine(46)-N(7))-methyltransferase</fullName>
    </alternativeName>
    <alternativeName>
        <fullName evidence="1">tRNA(m7G46)-methyltransferase</fullName>
    </alternativeName>
</protein>
<proteinExistence type="evidence at transcript level"/>
<dbReference type="EC" id="2.1.1.33" evidence="1"/>
<dbReference type="EMBL" id="EU952182">
    <property type="protein sequence ID" value="ACG24300.1"/>
    <property type="molecule type" value="mRNA"/>
</dbReference>
<dbReference type="EMBL" id="BT066355">
    <property type="protein sequence ID" value="ACN33252.1"/>
    <property type="molecule type" value="mRNA"/>
</dbReference>
<dbReference type="RefSeq" id="NP_001146900.1">
    <property type="nucleotide sequence ID" value="NM_001153428.1"/>
</dbReference>
<dbReference type="RefSeq" id="XP_008677164.1">
    <property type="nucleotide sequence ID" value="XM_008678942.4"/>
</dbReference>
<dbReference type="RefSeq" id="XP_008677165.1">
    <property type="nucleotide sequence ID" value="XM_008678943.4"/>
</dbReference>
<dbReference type="RefSeq" id="XP_008677166.1">
    <property type="nucleotide sequence ID" value="XM_008678944.2"/>
</dbReference>
<dbReference type="SMR" id="B6SHG7"/>
<dbReference type="FunCoup" id="B6SHG7">
    <property type="interactions" value="2634"/>
</dbReference>
<dbReference type="STRING" id="4577.B6SHG7"/>
<dbReference type="PaxDb" id="4577-GRMZM2G019597_P03"/>
<dbReference type="EnsemblPlants" id="Zm00001eb208790_T001">
    <property type="protein sequence ID" value="Zm00001eb208790_P001"/>
    <property type="gene ID" value="Zm00001eb208790"/>
</dbReference>
<dbReference type="EnsemblPlants" id="Zm00001eb208790_T002">
    <property type="protein sequence ID" value="Zm00001eb208790_P002"/>
    <property type="gene ID" value="Zm00001eb208790"/>
</dbReference>
<dbReference type="EnsemblPlants" id="Zm00001eb208790_T003">
    <property type="protein sequence ID" value="Zm00001eb208790_P003"/>
    <property type="gene ID" value="Zm00001eb208790"/>
</dbReference>
<dbReference type="GeneID" id="100280508"/>
<dbReference type="Gramene" id="Zm00001eb208790_T001">
    <property type="protein sequence ID" value="Zm00001eb208790_P001"/>
    <property type="gene ID" value="Zm00001eb208790"/>
</dbReference>
<dbReference type="Gramene" id="Zm00001eb208790_T002">
    <property type="protein sequence ID" value="Zm00001eb208790_P002"/>
    <property type="gene ID" value="Zm00001eb208790"/>
</dbReference>
<dbReference type="Gramene" id="Zm00001eb208790_T003">
    <property type="protein sequence ID" value="Zm00001eb208790_P003"/>
    <property type="gene ID" value="Zm00001eb208790"/>
</dbReference>
<dbReference type="KEGG" id="zma:100280508"/>
<dbReference type="eggNOG" id="KOG3115">
    <property type="taxonomic scope" value="Eukaryota"/>
</dbReference>
<dbReference type="HOGENOM" id="CLU_050910_3_0_1"/>
<dbReference type="InParanoid" id="B6SHG7"/>
<dbReference type="OMA" id="LPNYFAK"/>
<dbReference type="OrthoDB" id="47276at2759"/>
<dbReference type="UniPathway" id="UPA00989"/>
<dbReference type="Proteomes" id="UP000007305">
    <property type="component" value="Chromosome 4"/>
</dbReference>
<dbReference type="ExpressionAtlas" id="B6SHG7">
    <property type="expression patterns" value="baseline and differential"/>
</dbReference>
<dbReference type="GO" id="GO:0005634">
    <property type="term" value="C:nucleus"/>
    <property type="evidence" value="ECO:0007669"/>
    <property type="project" value="UniProtKB-SubCell"/>
</dbReference>
<dbReference type="GO" id="GO:0043527">
    <property type="term" value="C:tRNA methyltransferase complex"/>
    <property type="evidence" value="ECO:0000318"/>
    <property type="project" value="GO_Central"/>
</dbReference>
<dbReference type="GO" id="GO:0008176">
    <property type="term" value="F:tRNA (guanine(46)-N7)-methyltransferase activity"/>
    <property type="evidence" value="ECO:0000318"/>
    <property type="project" value="GO_Central"/>
</dbReference>
<dbReference type="GO" id="GO:0000049">
    <property type="term" value="F:tRNA binding"/>
    <property type="evidence" value="ECO:0007669"/>
    <property type="project" value="UniProtKB-UniRule"/>
</dbReference>
<dbReference type="GO" id="GO:0036265">
    <property type="term" value="P:RNA (guanine-N7)-methylation"/>
    <property type="evidence" value="ECO:0000318"/>
    <property type="project" value="GO_Central"/>
</dbReference>
<dbReference type="GO" id="GO:0030488">
    <property type="term" value="P:tRNA methylation"/>
    <property type="evidence" value="ECO:0000318"/>
    <property type="project" value="GO_Central"/>
</dbReference>
<dbReference type="CDD" id="cd02440">
    <property type="entry name" value="AdoMet_MTases"/>
    <property type="match status" value="1"/>
</dbReference>
<dbReference type="FunFam" id="3.40.50.150:FF:000158">
    <property type="entry name" value="tRNA (guanine-N(7)-)-methyltransferase"/>
    <property type="match status" value="1"/>
</dbReference>
<dbReference type="Gene3D" id="3.40.50.150">
    <property type="entry name" value="Vaccinia Virus protein VP39"/>
    <property type="match status" value="1"/>
</dbReference>
<dbReference type="HAMAP" id="MF_03055">
    <property type="entry name" value="tRNA_methyltr_TrmB_euk"/>
    <property type="match status" value="1"/>
</dbReference>
<dbReference type="InterPro" id="IPR029063">
    <property type="entry name" value="SAM-dependent_MTases_sf"/>
</dbReference>
<dbReference type="InterPro" id="IPR025763">
    <property type="entry name" value="Trm8_euk"/>
</dbReference>
<dbReference type="InterPro" id="IPR003358">
    <property type="entry name" value="tRNA_(Gua-N-7)_MeTrfase_Trmb"/>
</dbReference>
<dbReference type="NCBIfam" id="TIGR00091">
    <property type="entry name" value="tRNA (guanosine(46)-N7)-methyltransferase TrmB"/>
    <property type="match status" value="1"/>
</dbReference>
<dbReference type="PANTHER" id="PTHR23417">
    <property type="entry name" value="3-DEOXY-D-MANNO-OCTULOSONIC-ACID TRANSFERASE/TRNA GUANINE-N 7 - -METHYLTRANSFERASE"/>
    <property type="match status" value="1"/>
</dbReference>
<dbReference type="PANTHER" id="PTHR23417:SF16">
    <property type="entry name" value="TRNA (GUANINE-N(7)-)-METHYLTRANSFERASE"/>
    <property type="match status" value="1"/>
</dbReference>
<dbReference type="Pfam" id="PF02390">
    <property type="entry name" value="Methyltransf_4"/>
    <property type="match status" value="1"/>
</dbReference>
<dbReference type="SUPFAM" id="SSF53335">
    <property type="entry name" value="S-adenosyl-L-methionine-dependent methyltransferases"/>
    <property type="match status" value="1"/>
</dbReference>
<dbReference type="PROSITE" id="PS51625">
    <property type="entry name" value="SAM_MT_TRMB"/>
    <property type="match status" value="1"/>
</dbReference>
<organism>
    <name type="scientific">Zea mays</name>
    <name type="common">Maize</name>
    <dbReference type="NCBI Taxonomy" id="4577"/>
    <lineage>
        <taxon>Eukaryota</taxon>
        <taxon>Viridiplantae</taxon>
        <taxon>Streptophyta</taxon>
        <taxon>Embryophyta</taxon>
        <taxon>Tracheophyta</taxon>
        <taxon>Spermatophyta</taxon>
        <taxon>Magnoliopsida</taxon>
        <taxon>Liliopsida</taxon>
        <taxon>Poales</taxon>
        <taxon>Poaceae</taxon>
        <taxon>PACMAD clade</taxon>
        <taxon>Panicoideae</taxon>
        <taxon>Andropogonodae</taxon>
        <taxon>Andropogoneae</taxon>
        <taxon>Tripsacinae</taxon>
        <taxon>Zea</taxon>
    </lineage>
</organism>
<name>TRMB_MAIZE</name>
<keyword id="KW-0489">Methyltransferase</keyword>
<keyword id="KW-0539">Nucleus</keyword>
<keyword id="KW-1185">Reference proteome</keyword>
<keyword id="KW-0694">RNA-binding</keyword>
<keyword id="KW-0949">S-adenosyl-L-methionine</keyword>
<keyword id="KW-0808">Transferase</keyword>
<keyword id="KW-0819">tRNA processing</keyword>
<keyword id="KW-0820">tRNA-binding</keyword>